<name>RS10_YERPP</name>
<dbReference type="EMBL" id="CP000668">
    <property type="protein sequence ID" value="ABP38554.1"/>
    <property type="molecule type" value="Genomic_DNA"/>
</dbReference>
<dbReference type="RefSeq" id="WP_001181005.1">
    <property type="nucleotide sequence ID" value="NZ_CP009715.1"/>
</dbReference>
<dbReference type="SMR" id="A4TGZ1"/>
<dbReference type="GeneID" id="98390443"/>
<dbReference type="KEGG" id="ypp:YPDSF_0132"/>
<dbReference type="PATRIC" id="fig|386656.14.peg.435"/>
<dbReference type="GO" id="GO:1990904">
    <property type="term" value="C:ribonucleoprotein complex"/>
    <property type="evidence" value="ECO:0007669"/>
    <property type="project" value="UniProtKB-KW"/>
</dbReference>
<dbReference type="GO" id="GO:0005840">
    <property type="term" value="C:ribosome"/>
    <property type="evidence" value="ECO:0007669"/>
    <property type="project" value="UniProtKB-KW"/>
</dbReference>
<dbReference type="GO" id="GO:0003735">
    <property type="term" value="F:structural constituent of ribosome"/>
    <property type="evidence" value="ECO:0007669"/>
    <property type="project" value="InterPro"/>
</dbReference>
<dbReference type="GO" id="GO:0000049">
    <property type="term" value="F:tRNA binding"/>
    <property type="evidence" value="ECO:0007669"/>
    <property type="project" value="UniProtKB-UniRule"/>
</dbReference>
<dbReference type="GO" id="GO:0006412">
    <property type="term" value="P:translation"/>
    <property type="evidence" value="ECO:0007669"/>
    <property type="project" value="UniProtKB-UniRule"/>
</dbReference>
<dbReference type="FunFam" id="3.30.70.600:FF:000001">
    <property type="entry name" value="30S ribosomal protein S10"/>
    <property type="match status" value="1"/>
</dbReference>
<dbReference type="Gene3D" id="3.30.70.600">
    <property type="entry name" value="Ribosomal protein S10 domain"/>
    <property type="match status" value="1"/>
</dbReference>
<dbReference type="HAMAP" id="MF_00508">
    <property type="entry name" value="Ribosomal_uS10"/>
    <property type="match status" value="1"/>
</dbReference>
<dbReference type="InterPro" id="IPR001848">
    <property type="entry name" value="Ribosomal_uS10"/>
</dbReference>
<dbReference type="InterPro" id="IPR018268">
    <property type="entry name" value="Ribosomal_uS10_CS"/>
</dbReference>
<dbReference type="InterPro" id="IPR027486">
    <property type="entry name" value="Ribosomal_uS10_dom"/>
</dbReference>
<dbReference type="InterPro" id="IPR036838">
    <property type="entry name" value="Ribosomal_uS10_dom_sf"/>
</dbReference>
<dbReference type="NCBIfam" id="NF001861">
    <property type="entry name" value="PRK00596.1"/>
    <property type="match status" value="1"/>
</dbReference>
<dbReference type="NCBIfam" id="TIGR01049">
    <property type="entry name" value="rpsJ_bact"/>
    <property type="match status" value="1"/>
</dbReference>
<dbReference type="PANTHER" id="PTHR11700">
    <property type="entry name" value="30S RIBOSOMAL PROTEIN S10 FAMILY MEMBER"/>
    <property type="match status" value="1"/>
</dbReference>
<dbReference type="Pfam" id="PF00338">
    <property type="entry name" value="Ribosomal_S10"/>
    <property type="match status" value="1"/>
</dbReference>
<dbReference type="PRINTS" id="PR00971">
    <property type="entry name" value="RIBOSOMALS10"/>
</dbReference>
<dbReference type="SMART" id="SM01403">
    <property type="entry name" value="Ribosomal_S10"/>
    <property type="match status" value="1"/>
</dbReference>
<dbReference type="SUPFAM" id="SSF54999">
    <property type="entry name" value="Ribosomal protein S10"/>
    <property type="match status" value="1"/>
</dbReference>
<dbReference type="PROSITE" id="PS00361">
    <property type="entry name" value="RIBOSOMAL_S10"/>
    <property type="match status" value="1"/>
</dbReference>
<evidence type="ECO:0000255" key="1">
    <source>
        <dbReference type="HAMAP-Rule" id="MF_00508"/>
    </source>
</evidence>
<evidence type="ECO:0000305" key="2"/>
<protein>
    <recommendedName>
        <fullName evidence="1">Small ribosomal subunit protein uS10</fullName>
    </recommendedName>
    <alternativeName>
        <fullName evidence="2">30S ribosomal protein S10</fullName>
    </alternativeName>
</protein>
<proteinExistence type="inferred from homology"/>
<reference key="1">
    <citation type="submission" date="2007-02" db="EMBL/GenBank/DDBJ databases">
        <title>Complete sequence of chromosome of Yersinia pestis Pestoides F.</title>
        <authorList>
            <consortium name="US DOE Joint Genome Institute"/>
            <person name="Copeland A."/>
            <person name="Lucas S."/>
            <person name="Lapidus A."/>
            <person name="Barry K."/>
            <person name="Detter J.C."/>
            <person name="Glavina del Rio T."/>
            <person name="Hammon N."/>
            <person name="Israni S."/>
            <person name="Dalin E."/>
            <person name="Tice H."/>
            <person name="Pitluck S."/>
            <person name="Di Bartolo G."/>
            <person name="Chain P."/>
            <person name="Malfatti S."/>
            <person name="Shin M."/>
            <person name="Vergez L."/>
            <person name="Schmutz J."/>
            <person name="Larimer F."/>
            <person name="Land M."/>
            <person name="Hauser L."/>
            <person name="Worsham P."/>
            <person name="Chu M."/>
            <person name="Bearden S."/>
            <person name="Garcia E."/>
            <person name="Richardson P."/>
        </authorList>
    </citation>
    <scope>NUCLEOTIDE SEQUENCE [LARGE SCALE GENOMIC DNA]</scope>
    <source>
        <strain>Pestoides F</strain>
    </source>
</reference>
<accession>A4TGZ1</accession>
<keyword id="KW-0687">Ribonucleoprotein</keyword>
<keyword id="KW-0689">Ribosomal protein</keyword>
<sequence>MQNQRIRIRLKAFDHRLIDQSTAEIVETAKRTGAQVRGPIPLPTRKERFTVLISPHVNKDARDQYEIRTHKRLVDIVEPTEKTVDALMRLDLAAGVDVQISLG</sequence>
<comment type="function">
    <text evidence="1">Involved in the binding of tRNA to the ribosomes.</text>
</comment>
<comment type="subunit">
    <text evidence="1">Part of the 30S ribosomal subunit.</text>
</comment>
<comment type="similarity">
    <text evidence="1">Belongs to the universal ribosomal protein uS10 family.</text>
</comment>
<feature type="chain" id="PRO_1000015137" description="Small ribosomal subunit protein uS10">
    <location>
        <begin position="1"/>
        <end position="103"/>
    </location>
</feature>
<organism>
    <name type="scientific">Yersinia pestis (strain Pestoides F)</name>
    <dbReference type="NCBI Taxonomy" id="386656"/>
    <lineage>
        <taxon>Bacteria</taxon>
        <taxon>Pseudomonadati</taxon>
        <taxon>Pseudomonadota</taxon>
        <taxon>Gammaproteobacteria</taxon>
        <taxon>Enterobacterales</taxon>
        <taxon>Yersiniaceae</taxon>
        <taxon>Yersinia</taxon>
    </lineage>
</organism>
<gene>
    <name evidence="1" type="primary">rpsJ</name>
    <name type="ordered locus">YPDSF_0132</name>
</gene>